<protein>
    <recommendedName>
        <fullName>Glutathione S-transferase Y-2</fullName>
        <ecNumber>2.5.1.18</ecNumber>
    </recommendedName>
</protein>
<accession>P30102</accession>
<sequence length="191" mass="21652">MTFATVYIKPHTPRGDWLASLGQYVGLEIKTVDYKSAEASKFEELFPLKRVPALVTPNGFQLTELIAIVEYIVAKGSKPELSGKTTEERATNTRWLSFFNSDFVQAAGGYFMGPNDEIKQQSLQTMLSLLEYIDKHLSQSKYFTNNTILTADIFAFQIFAMAKQFGVDFTHYPNVERFTGEVSQHPIIKNM</sequence>
<dbReference type="EC" id="2.5.1.18"/>
<dbReference type="EMBL" id="X57957">
    <property type="protein sequence ID" value="CAA41025.1"/>
    <property type="molecule type" value="mRNA"/>
</dbReference>
<dbReference type="PIR" id="S16178">
    <property type="entry name" value="S16178"/>
</dbReference>
<dbReference type="SMR" id="P30102"/>
<dbReference type="VEuPathDB" id="FungiDB:C5L36_0D05800"/>
<dbReference type="eggNOG" id="KOG0867">
    <property type="taxonomic scope" value="Eukaryota"/>
</dbReference>
<dbReference type="OrthoDB" id="249703at2759"/>
<dbReference type="GO" id="GO:0005737">
    <property type="term" value="C:cytoplasm"/>
    <property type="evidence" value="ECO:0007669"/>
    <property type="project" value="TreeGrafter"/>
</dbReference>
<dbReference type="GO" id="GO:0005634">
    <property type="term" value="C:nucleus"/>
    <property type="evidence" value="ECO:0007669"/>
    <property type="project" value="TreeGrafter"/>
</dbReference>
<dbReference type="GO" id="GO:0004364">
    <property type="term" value="F:glutathione transferase activity"/>
    <property type="evidence" value="ECO:0007669"/>
    <property type="project" value="UniProtKB-EC"/>
</dbReference>
<dbReference type="GO" id="GO:0006414">
    <property type="term" value="P:translational elongation"/>
    <property type="evidence" value="ECO:0007669"/>
    <property type="project" value="TreeGrafter"/>
</dbReference>
<dbReference type="CDD" id="cd03044">
    <property type="entry name" value="GST_N_EF1Bgamma"/>
    <property type="match status" value="1"/>
</dbReference>
<dbReference type="FunFam" id="3.40.30.10:FF:000142">
    <property type="entry name" value="Elongation factor 1 gamma"/>
    <property type="match status" value="1"/>
</dbReference>
<dbReference type="Gene3D" id="1.20.1050.10">
    <property type="match status" value="1"/>
</dbReference>
<dbReference type="Gene3D" id="3.40.30.10">
    <property type="entry name" value="Glutaredoxin"/>
    <property type="match status" value="1"/>
</dbReference>
<dbReference type="InterPro" id="IPR050802">
    <property type="entry name" value="EF-GSTs"/>
</dbReference>
<dbReference type="InterPro" id="IPR010987">
    <property type="entry name" value="Glutathione-S-Trfase_C-like"/>
</dbReference>
<dbReference type="InterPro" id="IPR036282">
    <property type="entry name" value="Glutathione-S-Trfase_C_sf"/>
</dbReference>
<dbReference type="InterPro" id="IPR040079">
    <property type="entry name" value="Glutathione_S-Trfase"/>
</dbReference>
<dbReference type="InterPro" id="IPR004045">
    <property type="entry name" value="Glutathione_S-Trfase_N"/>
</dbReference>
<dbReference type="InterPro" id="IPR004046">
    <property type="entry name" value="GST_C"/>
</dbReference>
<dbReference type="InterPro" id="IPR036249">
    <property type="entry name" value="Thioredoxin-like_sf"/>
</dbReference>
<dbReference type="PANTHER" id="PTHR43986">
    <property type="entry name" value="ELONGATION FACTOR 1-GAMMA"/>
    <property type="match status" value="1"/>
</dbReference>
<dbReference type="PANTHER" id="PTHR43986:SF1">
    <property type="entry name" value="ELONGATION FACTOR 1-GAMMA"/>
    <property type="match status" value="1"/>
</dbReference>
<dbReference type="Pfam" id="PF00043">
    <property type="entry name" value="GST_C"/>
    <property type="match status" value="1"/>
</dbReference>
<dbReference type="Pfam" id="PF02798">
    <property type="entry name" value="GST_N"/>
    <property type="match status" value="1"/>
</dbReference>
<dbReference type="SFLD" id="SFLDS00019">
    <property type="entry name" value="Glutathione_Transferase_(cytos"/>
    <property type="match status" value="1"/>
</dbReference>
<dbReference type="SUPFAM" id="SSF47616">
    <property type="entry name" value="GST C-terminal domain-like"/>
    <property type="match status" value="1"/>
</dbReference>
<dbReference type="SUPFAM" id="SSF52833">
    <property type="entry name" value="Thioredoxin-like"/>
    <property type="match status" value="1"/>
</dbReference>
<dbReference type="PROSITE" id="PS50405">
    <property type="entry name" value="GST_CTER"/>
    <property type="match status" value="1"/>
</dbReference>
<dbReference type="PROSITE" id="PS50404">
    <property type="entry name" value="GST_NTER"/>
    <property type="match status" value="1"/>
</dbReference>
<reference key="1">
    <citation type="journal article" date="1991" name="Biochim. Biophys. Acta">
        <title>Nucleotide sequence of the yeast glutathione S-transferase cDNA.</title>
        <authorList>
            <person name="Tamaki H."/>
            <person name="Kumagai H."/>
            <person name="Tochikura T."/>
        </authorList>
    </citation>
    <scope>NUCLEOTIDE SEQUENCE [MRNA]</scope>
</reference>
<reference key="2">
    <citation type="journal article" date="1990" name="Biochem. Biophys. Res. Commun.">
        <title>Glutathione S-transferase in yeast: induction of mRNA, cDNA cloning and expression in Escherichia coli.</title>
        <authorList>
            <person name="Tamaki H."/>
            <person name="Kumagai H."/>
            <person name="Tochikura T."/>
        </authorList>
    </citation>
    <scope>PROTEIN SEQUENCE OF 2-16 AND 164-189</scope>
</reference>
<organism>
    <name type="scientific">Pichia kudriavzevii</name>
    <name type="common">Yeast</name>
    <name type="synonym">Issatchenkia orientalis</name>
    <dbReference type="NCBI Taxonomy" id="4909"/>
    <lineage>
        <taxon>Eukaryota</taxon>
        <taxon>Fungi</taxon>
        <taxon>Dikarya</taxon>
        <taxon>Ascomycota</taxon>
        <taxon>Saccharomycotina</taxon>
        <taxon>Pichiomycetes</taxon>
        <taxon>Pichiales</taxon>
        <taxon>Pichiaceae</taxon>
        <taxon>Pichia</taxon>
    </lineage>
</organism>
<feature type="initiator methionine" description="Removed" evidence="1">
    <location>
        <position position="1"/>
    </location>
</feature>
<feature type="chain" id="PRO_0000185983" description="Glutathione S-transferase Y-2">
    <location>
        <begin position="2"/>
        <end position="191"/>
    </location>
</feature>
<feature type="domain" description="GST N-terminal">
    <location>
        <begin position="2"/>
        <end position="80"/>
    </location>
</feature>
<feature type="domain" description="GST C-terminal">
    <location>
        <begin position="85"/>
        <end position="191"/>
    </location>
</feature>
<evidence type="ECO:0000269" key="1">
    <source>
    </source>
</evidence>
<evidence type="ECO:0000305" key="2"/>
<comment type="function">
    <text>Conjugation of reduced glutathione to a wide number of exogenous and endogenous hydrophobic electrophiles.</text>
</comment>
<comment type="catalytic activity">
    <reaction>
        <text>RX + glutathione = an S-substituted glutathione + a halide anion + H(+)</text>
        <dbReference type="Rhea" id="RHEA:16437"/>
        <dbReference type="ChEBI" id="CHEBI:15378"/>
        <dbReference type="ChEBI" id="CHEBI:16042"/>
        <dbReference type="ChEBI" id="CHEBI:17792"/>
        <dbReference type="ChEBI" id="CHEBI:57925"/>
        <dbReference type="ChEBI" id="CHEBI:90779"/>
        <dbReference type="EC" id="2.5.1.18"/>
    </reaction>
</comment>
<comment type="induction">
    <text>By O-dinitrobenzene.</text>
</comment>
<comment type="similarity">
    <text evidence="2">Belongs to the GST superfamily.</text>
</comment>
<gene>
    <name type="primary">GSTY2</name>
</gene>
<name>GSTY2_PICKU</name>
<keyword id="KW-0903">Direct protein sequencing</keyword>
<keyword id="KW-0808">Transferase</keyword>
<proteinExistence type="evidence at protein level"/>